<sequence>MSITVEEKARLIKEYATKEGDTGSPEVQVAVLSSRIATLTEHFKAHKKDNHSRRGLLMMVAQRRKLLDYLKKKDEGRYTALIARLGLRR</sequence>
<protein>
    <recommendedName>
        <fullName evidence="1">Small ribosomal subunit protein uS15</fullName>
    </recommendedName>
    <alternativeName>
        <fullName evidence="2">30S ribosomal protein S15</fullName>
    </alternativeName>
</protein>
<reference key="1">
    <citation type="submission" date="2007-02" db="EMBL/GenBank/DDBJ databases">
        <title>Complete sequence of chromosome 1 of Rhodobacter sphaeroides ATCC 17029.</title>
        <authorList>
            <person name="Copeland A."/>
            <person name="Lucas S."/>
            <person name="Lapidus A."/>
            <person name="Barry K."/>
            <person name="Detter J.C."/>
            <person name="Glavina del Rio T."/>
            <person name="Hammon N."/>
            <person name="Israni S."/>
            <person name="Dalin E."/>
            <person name="Tice H."/>
            <person name="Pitluck S."/>
            <person name="Kiss H."/>
            <person name="Brettin T."/>
            <person name="Bruce D."/>
            <person name="Han C."/>
            <person name="Tapia R."/>
            <person name="Gilna P."/>
            <person name="Schmutz J."/>
            <person name="Larimer F."/>
            <person name="Land M."/>
            <person name="Hauser L."/>
            <person name="Kyrpides N."/>
            <person name="Mikhailova N."/>
            <person name="Richardson P."/>
            <person name="Mackenzie C."/>
            <person name="Choudhary M."/>
            <person name="Donohue T.J."/>
            <person name="Kaplan S."/>
        </authorList>
    </citation>
    <scope>NUCLEOTIDE SEQUENCE [LARGE SCALE GENOMIC DNA]</scope>
    <source>
        <strain>ATCC 17029 / ATH 2.4.9</strain>
    </source>
</reference>
<accession>A3PNF9</accession>
<feature type="chain" id="PRO_1000054856" description="Small ribosomal subunit protein uS15">
    <location>
        <begin position="1"/>
        <end position="89"/>
    </location>
</feature>
<evidence type="ECO:0000255" key="1">
    <source>
        <dbReference type="HAMAP-Rule" id="MF_01343"/>
    </source>
</evidence>
<evidence type="ECO:0000305" key="2"/>
<gene>
    <name evidence="1" type="primary">rpsO</name>
    <name type="ordered locus">Rsph17029_2773</name>
</gene>
<keyword id="KW-0687">Ribonucleoprotein</keyword>
<keyword id="KW-0689">Ribosomal protein</keyword>
<keyword id="KW-0694">RNA-binding</keyword>
<keyword id="KW-0699">rRNA-binding</keyword>
<proteinExistence type="inferred from homology"/>
<dbReference type="EMBL" id="CP000577">
    <property type="protein sequence ID" value="ABN77875.1"/>
    <property type="molecule type" value="Genomic_DNA"/>
</dbReference>
<dbReference type="RefSeq" id="WP_002721510.1">
    <property type="nucleotide sequence ID" value="NC_009049.1"/>
</dbReference>
<dbReference type="SMR" id="A3PNF9"/>
<dbReference type="GeneID" id="67447886"/>
<dbReference type="KEGG" id="rsh:Rsph17029_2773"/>
<dbReference type="HOGENOM" id="CLU_148518_0_0_5"/>
<dbReference type="GO" id="GO:0022627">
    <property type="term" value="C:cytosolic small ribosomal subunit"/>
    <property type="evidence" value="ECO:0007669"/>
    <property type="project" value="TreeGrafter"/>
</dbReference>
<dbReference type="GO" id="GO:0019843">
    <property type="term" value="F:rRNA binding"/>
    <property type="evidence" value="ECO:0007669"/>
    <property type="project" value="UniProtKB-UniRule"/>
</dbReference>
<dbReference type="GO" id="GO:0003735">
    <property type="term" value="F:structural constituent of ribosome"/>
    <property type="evidence" value="ECO:0007669"/>
    <property type="project" value="InterPro"/>
</dbReference>
<dbReference type="GO" id="GO:0006412">
    <property type="term" value="P:translation"/>
    <property type="evidence" value="ECO:0007669"/>
    <property type="project" value="UniProtKB-UniRule"/>
</dbReference>
<dbReference type="CDD" id="cd00353">
    <property type="entry name" value="Ribosomal_S15p_S13e"/>
    <property type="match status" value="1"/>
</dbReference>
<dbReference type="FunFam" id="1.10.287.10:FF:000002">
    <property type="entry name" value="30S ribosomal protein S15"/>
    <property type="match status" value="1"/>
</dbReference>
<dbReference type="Gene3D" id="6.10.250.3130">
    <property type="match status" value="1"/>
</dbReference>
<dbReference type="Gene3D" id="1.10.287.10">
    <property type="entry name" value="S15/NS1, RNA-binding"/>
    <property type="match status" value="1"/>
</dbReference>
<dbReference type="HAMAP" id="MF_01343_B">
    <property type="entry name" value="Ribosomal_uS15_B"/>
    <property type="match status" value="1"/>
</dbReference>
<dbReference type="InterPro" id="IPR000589">
    <property type="entry name" value="Ribosomal_uS15"/>
</dbReference>
<dbReference type="InterPro" id="IPR005290">
    <property type="entry name" value="Ribosomal_uS15_bac-type"/>
</dbReference>
<dbReference type="InterPro" id="IPR009068">
    <property type="entry name" value="uS15_NS1_RNA-bd_sf"/>
</dbReference>
<dbReference type="NCBIfam" id="TIGR00952">
    <property type="entry name" value="S15_bact"/>
    <property type="match status" value="1"/>
</dbReference>
<dbReference type="PANTHER" id="PTHR23321">
    <property type="entry name" value="RIBOSOMAL PROTEIN S15, BACTERIAL AND ORGANELLAR"/>
    <property type="match status" value="1"/>
</dbReference>
<dbReference type="PANTHER" id="PTHR23321:SF26">
    <property type="entry name" value="SMALL RIBOSOMAL SUBUNIT PROTEIN US15M"/>
    <property type="match status" value="1"/>
</dbReference>
<dbReference type="Pfam" id="PF00312">
    <property type="entry name" value="Ribosomal_S15"/>
    <property type="match status" value="1"/>
</dbReference>
<dbReference type="SMART" id="SM01387">
    <property type="entry name" value="Ribosomal_S15"/>
    <property type="match status" value="1"/>
</dbReference>
<dbReference type="SUPFAM" id="SSF47060">
    <property type="entry name" value="S15/NS1 RNA-binding domain"/>
    <property type="match status" value="1"/>
</dbReference>
<dbReference type="PROSITE" id="PS00362">
    <property type="entry name" value="RIBOSOMAL_S15"/>
    <property type="match status" value="1"/>
</dbReference>
<comment type="function">
    <text evidence="1">One of the primary rRNA binding proteins, it binds directly to 16S rRNA where it helps nucleate assembly of the platform of the 30S subunit by binding and bridging several RNA helices of the 16S rRNA.</text>
</comment>
<comment type="function">
    <text evidence="1">Forms an intersubunit bridge (bridge B4) with the 23S rRNA of the 50S subunit in the ribosome.</text>
</comment>
<comment type="subunit">
    <text evidence="1">Part of the 30S ribosomal subunit. Forms a bridge to the 50S subunit in the 70S ribosome, contacting the 23S rRNA.</text>
</comment>
<comment type="similarity">
    <text evidence="1">Belongs to the universal ribosomal protein uS15 family.</text>
</comment>
<name>RS15_CERS1</name>
<organism>
    <name type="scientific">Cereibacter sphaeroides (strain ATCC 17029 / ATH 2.4.9)</name>
    <name type="common">Rhodobacter sphaeroides</name>
    <dbReference type="NCBI Taxonomy" id="349101"/>
    <lineage>
        <taxon>Bacteria</taxon>
        <taxon>Pseudomonadati</taxon>
        <taxon>Pseudomonadota</taxon>
        <taxon>Alphaproteobacteria</taxon>
        <taxon>Rhodobacterales</taxon>
        <taxon>Paracoccaceae</taxon>
        <taxon>Cereibacter</taxon>
    </lineage>
</organism>